<comment type="function">
    <text evidence="1">Substrate adapter for ufmylation, the covalent attachment of the ubiquitin-like modifier UFM1 to substrate proteins.</text>
</comment>
<comment type="subcellular location">
    <subcellularLocation>
        <location evidence="1">Endoplasmic reticulum membrane</location>
        <topology evidence="1">Single-pass membrane protein</topology>
    </subcellularLocation>
</comment>
<comment type="similarity">
    <text evidence="4">Belongs to the DDRGK1 family.</text>
</comment>
<comment type="sequence caution" evidence="4">
    <conflict type="erroneous gene model prediction">
        <sequence resource="EMBL-CDS" id="CAB38842"/>
    </conflict>
</comment>
<comment type="sequence caution" evidence="4">
    <conflict type="erroneous gene model prediction">
        <sequence resource="EMBL-CDS" id="CAB79567"/>
    </conflict>
</comment>
<feature type="chain" id="PRO_0000391870" description="DDRGK domain-containing protein 1">
    <location>
        <begin position="1"/>
        <end position="298"/>
    </location>
</feature>
<feature type="topological domain" description="Lumenal" evidence="4">
    <location>
        <begin position="1"/>
        <end position="2"/>
    </location>
</feature>
<feature type="transmembrane region" description="Helical" evidence="2">
    <location>
        <begin position="3"/>
        <end position="23"/>
    </location>
</feature>
<feature type="topological domain" description="Cytoplasmic" evidence="4">
    <location>
        <begin position="24"/>
        <end position="298"/>
    </location>
</feature>
<feature type="region of interest" description="Disordered" evidence="3">
    <location>
        <begin position="31"/>
        <end position="155"/>
    </location>
</feature>
<feature type="compositionally biased region" description="Basic and acidic residues" evidence="3">
    <location>
        <begin position="101"/>
        <end position="155"/>
    </location>
</feature>
<dbReference type="EMBL" id="AL035680">
    <property type="protein sequence ID" value="CAB38842.1"/>
    <property type="status" value="ALT_SEQ"/>
    <property type="molecule type" value="Genomic_DNA"/>
</dbReference>
<dbReference type="EMBL" id="AL161566">
    <property type="protein sequence ID" value="CAB79567.1"/>
    <property type="status" value="ALT_SEQ"/>
    <property type="molecule type" value="Genomic_DNA"/>
</dbReference>
<dbReference type="EMBL" id="CP002687">
    <property type="protein sequence ID" value="AEE85303.1"/>
    <property type="molecule type" value="Genomic_DNA"/>
</dbReference>
<dbReference type="EMBL" id="CP002687">
    <property type="protein sequence ID" value="AEE85304.1"/>
    <property type="molecule type" value="Genomic_DNA"/>
</dbReference>
<dbReference type="EMBL" id="AY035174">
    <property type="protein sequence ID" value="AAK59678.1"/>
    <property type="molecule type" value="mRNA"/>
</dbReference>
<dbReference type="EMBL" id="AY113927">
    <property type="protein sequence ID" value="AAM44975.1"/>
    <property type="molecule type" value="mRNA"/>
</dbReference>
<dbReference type="EMBL" id="AY087946">
    <property type="protein sequence ID" value="AAM65494.1"/>
    <property type="molecule type" value="mRNA"/>
</dbReference>
<dbReference type="PIR" id="T06042">
    <property type="entry name" value="T06042"/>
</dbReference>
<dbReference type="RefSeq" id="NP_567767.1">
    <property type="nucleotide sequence ID" value="NM_118846.4"/>
</dbReference>
<dbReference type="RefSeq" id="NP_849456.1">
    <property type="nucleotide sequence ID" value="NM_179125.4"/>
</dbReference>
<dbReference type="SMR" id="Q94C53"/>
<dbReference type="FunCoup" id="Q94C53">
    <property type="interactions" value="1256"/>
</dbReference>
<dbReference type="STRING" id="3702.Q94C53"/>
<dbReference type="iPTMnet" id="Q94C53"/>
<dbReference type="PaxDb" id="3702-AT4G27120.1"/>
<dbReference type="ProteomicsDB" id="224127"/>
<dbReference type="EnsemblPlants" id="AT4G27120.1">
    <property type="protein sequence ID" value="AT4G27120.1"/>
    <property type="gene ID" value="AT4G27120"/>
</dbReference>
<dbReference type="EnsemblPlants" id="AT4G27120.2">
    <property type="protein sequence ID" value="AT4G27120.2"/>
    <property type="gene ID" value="AT4G27120"/>
</dbReference>
<dbReference type="GeneID" id="828820"/>
<dbReference type="Gramene" id="AT4G27120.1">
    <property type="protein sequence ID" value="AT4G27120.1"/>
    <property type="gene ID" value="AT4G27120"/>
</dbReference>
<dbReference type="Gramene" id="AT4G27120.2">
    <property type="protein sequence ID" value="AT4G27120.2"/>
    <property type="gene ID" value="AT4G27120"/>
</dbReference>
<dbReference type="KEGG" id="ath:AT4G27120"/>
<dbReference type="Araport" id="AT4G27120"/>
<dbReference type="TAIR" id="AT4G27120"/>
<dbReference type="eggNOG" id="KOG3054">
    <property type="taxonomic scope" value="Eukaryota"/>
</dbReference>
<dbReference type="HOGENOM" id="CLU_059562_2_0_1"/>
<dbReference type="InParanoid" id="Q94C53"/>
<dbReference type="OMA" id="EFTRECN"/>
<dbReference type="OrthoDB" id="2285710at2759"/>
<dbReference type="PhylomeDB" id="Q94C53"/>
<dbReference type="PRO" id="PR:Q94C53"/>
<dbReference type="Proteomes" id="UP000006548">
    <property type="component" value="Chromosome 4"/>
</dbReference>
<dbReference type="ExpressionAtlas" id="Q94C53">
    <property type="expression patterns" value="baseline and differential"/>
</dbReference>
<dbReference type="GO" id="GO:0005829">
    <property type="term" value="C:cytosol"/>
    <property type="evidence" value="ECO:0007005"/>
    <property type="project" value="TAIR"/>
</dbReference>
<dbReference type="GO" id="GO:0005789">
    <property type="term" value="C:endoplasmic reticulum membrane"/>
    <property type="evidence" value="ECO:0007669"/>
    <property type="project" value="UniProtKB-SubCell"/>
</dbReference>
<dbReference type="FunFam" id="1.10.10.10:FF:000143">
    <property type="entry name" value="DDRGK domain-containing protein 1"/>
    <property type="match status" value="1"/>
</dbReference>
<dbReference type="Gene3D" id="1.10.10.10">
    <property type="entry name" value="Winged helix-like DNA-binding domain superfamily/Winged helix DNA-binding domain"/>
    <property type="match status" value="1"/>
</dbReference>
<dbReference type="InterPro" id="IPR019153">
    <property type="entry name" value="DDRGK_dom-contain"/>
</dbReference>
<dbReference type="InterPro" id="IPR050899">
    <property type="entry name" value="DDRGK_domain-containing"/>
</dbReference>
<dbReference type="InterPro" id="IPR036388">
    <property type="entry name" value="WH-like_DNA-bd_sf"/>
</dbReference>
<dbReference type="InterPro" id="IPR036390">
    <property type="entry name" value="WH_DNA-bd_sf"/>
</dbReference>
<dbReference type="PANTHER" id="PTHR48176">
    <property type="entry name" value="DDRGK DOMAIN-CONTAINING PROTEIN 1"/>
    <property type="match status" value="1"/>
</dbReference>
<dbReference type="PANTHER" id="PTHR48176:SF1">
    <property type="entry name" value="DDRGK DOMAIN-CONTAINING PROTEIN 1"/>
    <property type="match status" value="1"/>
</dbReference>
<dbReference type="Pfam" id="PF09756">
    <property type="entry name" value="DDRGK"/>
    <property type="match status" value="1"/>
</dbReference>
<dbReference type="SMART" id="SM01128">
    <property type="entry name" value="DDRGK"/>
    <property type="match status" value="1"/>
</dbReference>
<dbReference type="SUPFAM" id="SSF46785">
    <property type="entry name" value="Winged helix' DNA-binding domain"/>
    <property type="match status" value="1"/>
</dbReference>
<organism>
    <name type="scientific">Arabidopsis thaliana</name>
    <name type="common">Mouse-ear cress</name>
    <dbReference type="NCBI Taxonomy" id="3702"/>
    <lineage>
        <taxon>Eukaryota</taxon>
        <taxon>Viridiplantae</taxon>
        <taxon>Streptophyta</taxon>
        <taxon>Embryophyta</taxon>
        <taxon>Tracheophyta</taxon>
        <taxon>Spermatophyta</taxon>
        <taxon>Magnoliopsida</taxon>
        <taxon>eudicotyledons</taxon>
        <taxon>Gunneridae</taxon>
        <taxon>Pentapetalae</taxon>
        <taxon>rosids</taxon>
        <taxon>malvids</taxon>
        <taxon>Brassicales</taxon>
        <taxon>Brassicaceae</taxon>
        <taxon>Camelineae</taxon>
        <taxon>Arabidopsis</taxon>
    </lineage>
</organism>
<protein>
    <recommendedName>
        <fullName>DDRGK domain-containing protein 1</fullName>
    </recommendedName>
</protein>
<gene>
    <name type="ordered locus">At4g27120</name>
    <name type="ORF">T24A18.70</name>
</gene>
<evidence type="ECO:0000250" key="1">
    <source>
        <dbReference type="UniProtKB" id="Q96HY6"/>
    </source>
</evidence>
<evidence type="ECO:0000255" key="2"/>
<evidence type="ECO:0000256" key="3">
    <source>
        <dbReference type="SAM" id="MobiDB-lite"/>
    </source>
</evidence>
<evidence type="ECO:0000305" key="4"/>
<proteinExistence type="evidence at transcript level"/>
<name>DDRGK_ARATH</name>
<sequence length="298" mass="34019">MEEIFALIVSMILIVAVIPLFFWKRRRDARSREEVAEPPQVQPRENVARAGGGRRMRRRPAASGASSSTSNVQENGSGSEDEDEDEAGGTQARASKKKEKKRQEREAQRQAEEATRESRNTKQDWYAEMRRKKDEEREAEELKLEEEEKARQAKEEEAAALEFDKWKGEFSVDAEGTTEEVQGGNQDLLSEFVEYIKKQKCVPLEDLAAEFHLRTQECINRIASLESIGRLSGVMDDRGKYIYISMEEMNAVADYIKRQGRVSISHLASKSNQFIDLEPKVQHQLTEEISGMEEISVS</sequence>
<reference key="1">
    <citation type="journal article" date="1999" name="Nature">
        <title>Sequence and analysis of chromosome 4 of the plant Arabidopsis thaliana.</title>
        <authorList>
            <person name="Mayer K.F.X."/>
            <person name="Schueller C."/>
            <person name="Wambutt R."/>
            <person name="Murphy G."/>
            <person name="Volckaert G."/>
            <person name="Pohl T."/>
            <person name="Duesterhoeft A."/>
            <person name="Stiekema W."/>
            <person name="Entian K.-D."/>
            <person name="Terryn N."/>
            <person name="Harris B."/>
            <person name="Ansorge W."/>
            <person name="Brandt P."/>
            <person name="Grivell L.A."/>
            <person name="Rieger M."/>
            <person name="Weichselgartner M."/>
            <person name="de Simone V."/>
            <person name="Obermaier B."/>
            <person name="Mache R."/>
            <person name="Mueller M."/>
            <person name="Kreis M."/>
            <person name="Delseny M."/>
            <person name="Puigdomenech P."/>
            <person name="Watson M."/>
            <person name="Schmidtheini T."/>
            <person name="Reichert B."/>
            <person name="Portetelle D."/>
            <person name="Perez-Alonso M."/>
            <person name="Boutry M."/>
            <person name="Bancroft I."/>
            <person name="Vos P."/>
            <person name="Hoheisel J."/>
            <person name="Zimmermann W."/>
            <person name="Wedler H."/>
            <person name="Ridley P."/>
            <person name="Langham S.-A."/>
            <person name="McCullagh B."/>
            <person name="Bilham L."/>
            <person name="Robben J."/>
            <person name="van der Schueren J."/>
            <person name="Grymonprez B."/>
            <person name="Chuang Y.-J."/>
            <person name="Vandenbussche F."/>
            <person name="Braeken M."/>
            <person name="Weltjens I."/>
            <person name="Voet M."/>
            <person name="Bastiaens I."/>
            <person name="Aert R."/>
            <person name="Defoor E."/>
            <person name="Weitzenegger T."/>
            <person name="Bothe G."/>
            <person name="Ramsperger U."/>
            <person name="Hilbert H."/>
            <person name="Braun M."/>
            <person name="Holzer E."/>
            <person name="Brandt A."/>
            <person name="Peters S."/>
            <person name="van Staveren M."/>
            <person name="Dirkse W."/>
            <person name="Mooijman P."/>
            <person name="Klein Lankhorst R."/>
            <person name="Rose M."/>
            <person name="Hauf J."/>
            <person name="Koetter P."/>
            <person name="Berneiser S."/>
            <person name="Hempel S."/>
            <person name="Feldpausch M."/>
            <person name="Lamberth S."/>
            <person name="Van den Daele H."/>
            <person name="De Keyser A."/>
            <person name="Buysshaert C."/>
            <person name="Gielen J."/>
            <person name="Villarroel R."/>
            <person name="De Clercq R."/>
            <person name="van Montagu M."/>
            <person name="Rogers J."/>
            <person name="Cronin A."/>
            <person name="Quail M.A."/>
            <person name="Bray-Allen S."/>
            <person name="Clark L."/>
            <person name="Doggett J."/>
            <person name="Hall S."/>
            <person name="Kay M."/>
            <person name="Lennard N."/>
            <person name="McLay K."/>
            <person name="Mayes R."/>
            <person name="Pettett A."/>
            <person name="Rajandream M.A."/>
            <person name="Lyne M."/>
            <person name="Benes V."/>
            <person name="Rechmann S."/>
            <person name="Borkova D."/>
            <person name="Bloecker H."/>
            <person name="Scharfe M."/>
            <person name="Grimm M."/>
            <person name="Loehnert T.-H."/>
            <person name="Dose S."/>
            <person name="de Haan M."/>
            <person name="Maarse A.C."/>
            <person name="Schaefer M."/>
            <person name="Mueller-Auer S."/>
            <person name="Gabel C."/>
            <person name="Fuchs M."/>
            <person name="Fartmann B."/>
            <person name="Granderath K."/>
            <person name="Dauner D."/>
            <person name="Herzl A."/>
            <person name="Neumann S."/>
            <person name="Argiriou A."/>
            <person name="Vitale D."/>
            <person name="Liguori R."/>
            <person name="Piravandi E."/>
            <person name="Massenet O."/>
            <person name="Quigley F."/>
            <person name="Clabauld G."/>
            <person name="Muendlein A."/>
            <person name="Felber R."/>
            <person name="Schnabl S."/>
            <person name="Hiller R."/>
            <person name="Schmidt W."/>
            <person name="Lecharny A."/>
            <person name="Aubourg S."/>
            <person name="Chefdor F."/>
            <person name="Cooke R."/>
            <person name="Berger C."/>
            <person name="Monfort A."/>
            <person name="Casacuberta E."/>
            <person name="Gibbons T."/>
            <person name="Weber N."/>
            <person name="Vandenbol M."/>
            <person name="Bargues M."/>
            <person name="Terol J."/>
            <person name="Torres A."/>
            <person name="Perez-Perez A."/>
            <person name="Purnelle B."/>
            <person name="Bent E."/>
            <person name="Johnson S."/>
            <person name="Tacon D."/>
            <person name="Jesse T."/>
            <person name="Heijnen L."/>
            <person name="Schwarz S."/>
            <person name="Scholler P."/>
            <person name="Heber S."/>
            <person name="Francs P."/>
            <person name="Bielke C."/>
            <person name="Frishman D."/>
            <person name="Haase D."/>
            <person name="Lemcke K."/>
            <person name="Mewes H.-W."/>
            <person name="Stocker S."/>
            <person name="Zaccaria P."/>
            <person name="Bevan M."/>
            <person name="Wilson R.K."/>
            <person name="de la Bastide M."/>
            <person name="Habermann K."/>
            <person name="Parnell L."/>
            <person name="Dedhia N."/>
            <person name="Gnoj L."/>
            <person name="Schutz K."/>
            <person name="Huang E."/>
            <person name="Spiegel L."/>
            <person name="Sekhon M."/>
            <person name="Murray J."/>
            <person name="Sheet P."/>
            <person name="Cordes M."/>
            <person name="Abu-Threideh J."/>
            <person name="Stoneking T."/>
            <person name="Kalicki J."/>
            <person name="Graves T."/>
            <person name="Harmon G."/>
            <person name="Edwards J."/>
            <person name="Latreille P."/>
            <person name="Courtney L."/>
            <person name="Cloud J."/>
            <person name="Abbott A."/>
            <person name="Scott K."/>
            <person name="Johnson D."/>
            <person name="Minx P."/>
            <person name="Bentley D."/>
            <person name="Fulton B."/>
            <person name="Miller N."/>
            <person name="Greco T."/>
            <person name="Kemp K."/>
            <person name="Kramer J."/>
            <person name="Fulton L."/>
            <person name="Mardis E."/>
            <person name="Dante M."/>
            <person name="Pepin K."/>
            <person name="Hillier L.W."/>
            <person name="Nelson J."/>
            <person name="Spieth J."/>
            <person name="Ryan E."/>
            <person name="Andrews S."/>
            <person name="Geisel C."/>
            <person name="Layman D."/>
            <person name="Du H."/>
            <person name="Ali J."/>
            <person name="Berghoff A."/>
            <person name="Jones K."/>
            <person name="Drone K."/>
            <person name="Cotton M."/>
            <person name="Joshu C."/>
            <person name="Antonoiu B."/>
            <person name="Zidanic M."/>
            <person name="Strong C."/>
            <person name="Sun H."/>
            <person name="Lamar B."/>
            <person name="Yordan C."/>
            <person name="Ma P."/>
            <person name="Zhong J."/>
            <person name="Preston R."/>
            <person name="Vil D."/>
            <person name="Shekher M."/>
            <person name="Matero A."/>
            <person name="Shah R."/>
            <person name="Swaby I.K."/>
            <person name="O'Shaughnessy A."/>
            <person name="Rodriguez M."/>
            <person name="Hoffman J."/>
            <person name="Till S."/>
            <person name="Granat S."/>
            <person name="Shohdy N."/>
            <person name="Hasegawa A."/>
            <person name="Hameed A."/>
            <person name="Lodhi M."/>
            <person name="Johnson A."/>
            <person name="Chen E."/>
            <person name="Marra M.A."/>
            <person name="Martienssen R."/>
            <person name="McCombie W.R."/>
        </authorList>
    </citation>
    <scope>NUCLEOTIDE SEQUENCE [LARGE SCALE GENOMIC DNA]</scope>
    <source>
        <strain>cv. Columbia</strain>
    </source>
</reference>
<reference key="2">
    <citation type="journal article" date="2017" name="Plant J.">
        <title>Araport11: a complete reannotation of the Arabidopsis thaliana reference genome.</title>
        <authorList>
            <person name="Cheng C.Y."/>
            <person name="Krishnakumar V."/>
            <person name="Chan A.P."/>
            <person name="Thibaud-Nissen F."/>
            <person name="Schobel S."/>
            <person name="Town C.D."/>
        </authorList>
    </citation>
    <scope>GENOME REANNOTATION</scope>
    <source>
        <strain>cv. Columbia</strain>
    </source>
</reference>
<reference key="3">
    <citation type="journal article" date="2003" name="Science">
        <title>Empirical analysis of transcriptional activity in the Arabidopsis genome.</title>
        <authorList>
            <person name="Yamada K."/>
            <person name="Lim J."/>
            <person name="Dale J.M."/>
            <person name="Chen H."/>
            <person name="Shinn P."/>
            <person name="Palm C.J."/>
            <person name="Southwick A.M."/>
            <person name="Wu H.C."/>
            <person name="Kim C.J."/>
            <person name="Nguyen M."/>
            <person name="Pham P.K."/>
            <person name="Cheuk R.F."/>
            <person name="Karlin-Newmann G."/>
            <person name="Liu S.X."/>
            <person name="Lam B."/>
            <person name="Sakano H."/>
            <person name="Wu T."/>
            <person name="Yu G."/>
            <person name="Miranda M."/>
            <person name="Quach H.L."/>
            <person name="Tripp M."/>
            <person name="Chang C.H."/>
            <person name="Lee J.M."/>
            <person name="Toriumi M.J."/>
            <person name="Chan M.M."/>
            <person name="Tang C.C."/>
            <person name="Onodera C.S."/>
            <person name="Deng J.M."/>
            <person name="Akiyama K."/>
            <person name="Ansari Y."/>
            <person name="Arakawa T."/>
            <person name="Banh J."/>
            <person name="Banno F."/>
            <person name="Bowser L."/>
            <person name="Brooks S.Y."/>
            <person name="Carninci P."/>
            <person name="Chao Q."/>
            <person name="Choy N."/>
            <person name="Enju A."/>
            <person name="Goldsmith A.D."/>
            <person name="Gurjal M."/>
            <person name="Hansen N.F."/>
            <person name="Hayashizaki Y."/>
            <person name="Johnson-Hopson C."/>
            <person name="Hsuan V.W."/>
            <person name="Iida K."/>
            <person name="Karnes M."/>
            <person name="Khan S."/>
            <person name="Koesema E."/>
            <person name="Ishida J."/>
            <person name="Jiang P.X."/>
            <person name="Jones T."/>
            <person name="Kawai J."/>
            <person name="Kamiya A."/>
            <person name="Meyers C."/>
            <person name="Nakajima M."/>
            <person name="Narusaka M."/>
            <person name="Seki M."/>
            <person name="Sakurai T."/>
            <person name="Satou M."/>
            <person name="Tamse R."/>
            <person name="Vaysberg M."/>
            <person name="Wallender E.K."/>
            <person name="Wong C."/>
            <person name="Yamamura Y."/>
            <person name="Yuan S."/>
            <person name="Shinozaki K."/>
            <person name="Davis R.W."/>
            <person name="Theologis A."/>
            <person name="Ecker J.R."/>
        </authorList>
    </citation>
    <scope>NUCLEOTIDE SEQUENCE [LARGE SCALE MRNA]</scope>
    <source>
        <strain>cv. Columbia</strain>
    </source>
</reference>
<reference key="4">
    <citation type="submission" date="2002-03" db="EMBL/GenBank/DDBJ databases">
        <title>Full-length cDNA from Arabidopsis thaliana.</title>
        <authorList>
            <person name="Brover V.V."/>
            <person name="Troukhan M.E."/>
            <person name="Alexandrov N.A."/>
            <person name="Lu Y.-P."/>
            <person name="Flavell R.B."/>
            <person name="Feldmann K.A."/>
        </authorList>
    </citation>
    <scope>NUCLEOTIDE SEQUENCE [LARGE SCALE MRNA]</scope>
</reference>
<accession>Q94C53</accession>
<accession>Q8LAA5</accession>
<accession>Q9T046</accession>
<keyword id="KW-0256">Endoplasmic reticulum</keyword>
<keyword id="KW-0472">Membrane</keyword>
<keyword id="KW-1185">Reference proteome</keyword>
<keyword id="KW-0812">Transmembrane</keyword>
<keyword id="KW-1133">Transmembrane helix</keyword>
<keyword id="KW-0833">Ubl conjugation pathway</keyword>